<accession>P97490</accession>
<accession>G3X8V9</accession>
<proteinExistence type="evidence at protein level"/>
<sequence length="1249" mass="140095">MELSDVHCLSGSEELYTIQPTPPAGDDGSGSRPQRLLWQTAVRHITEQRFIHGHRGGGGGGVSRKASNPAGSGPNHHAPQLSSDSVLPLYSLGPGERAHNTGGTKVFPERSGSGSASGSGGGGDLGFLHLDCAPSNSDFFLNGGYSYRGVIFPTLRNSFKSRDLERLYQRYFLGQRRKSEVVMNVLDVLTKLTLLVLHLSLASAPMDPLKGILLGFFTGIEVVICALVVVRKDNTSHTYLQYSGVVTWVAMTTQILAAGLGYGLLGDGIGYVLFTLFATYSMLPLPLTWAILAGLGTSLLQVTLQVLIPRLAVFSINQVLAQVVLFMCMNTAGIFISYLSDRAQRQAFLETRRCVEARLRLETENQRQERLVLSVLPRFVVLEMINDMTNVEDEHLQHQFHRIYIHRYENVSILFADVKGFTNLSTTLSAQELVRMLNELFARFDRLAHEHHCLRIKILGDCYYCVSGLPEPRRDHAHCCVEMGLSMIKTIRFVRSRTKHDVDMRIGIHSGSVLCGVLGLRKWQFDVWSWDVDIANKLESGGIPGRIHISKATLDCLNGDYNVEEGHGKERNEFLRKHNIETYLIKQPEESLLCLPEDIVKESVSCSDRRNSGATFTEGSWSPELPFDNIVGKQNTLAALTRNSINLLPNHLAQALHVQSGPEEINKRIEHTIDLRSGDKLRREHIKPFSLMFKDSSLEHKYSQMRDEVFKSNLVCAFIVLLFITAIQSLLPSSRLMPMTIQFSILIMLHSALVLITTAEDYKCLPLILRKTCCWINETYLARNVIIFASILINFLGAVLNILWCDFDKSIPLKNLTFNSSAVFTDICSYPEYFVFTGVLAMVTCAVFLRLNSVLKLAVLLIMIAIYALLTETIYAGLFLSYDNLNHSGEDFLGTKEASLLLMAMFLLAVFYHGQQLEYTARLDFLWRVQAKEEINEMKELREHNENMLRNILPSHVARHFLEKDRDNEELYSQSYDAVGVMFASIPGFADFYSQTEMNNQGVECLRLLNEIIADFDELLGEDRFQDIEKIKTIGSTYMAVSGLSPEKQQCEDKWGHLCALADFSLALTESIQEINKHSFNNFELRIGISHGSVVAGVIGAKKPQYDIWGKTVNLASRMDSTGVSGRIQVPEETYLILKDQGFAFDYRGEIYVKGISEQEGKIKTYFLLGRVQPNPFILPPRRLPGQYSLAAVVLGLVQSLNRQRQKQLLNENSNSGIIKSHYNRRTLLTPSGPEPGAQAEGTDKSDLP</sequence>
<comment type="function">
    <text evidence="4 8 9 10 11 13 14 16 17 18">Catalyzes the formation of cAMP in response to calcium entry leadings to cAMP signaling activation that affect processes suche as synaptic plasticity and insulin secretion (PubMed:10482244, PubMed:10864938, PubMed:14585998, PubMed:18448650, PubMed:25403481). Plays a role in many brain functions, such as learning, memory, drug addiction, and anxiety modulation through regulation of synaptic plasticity by modulating long-term memory and long-term potentiation (LTP) through CREB transcription factor activity modulation (PubMed:10482244, PubMed:10864938, PubMed:12441059, PubMed:14585998, PubMed:18222416, PubMed:18448650, PubMed:20638449, PubMed:27234425). Plays a central role in insulin secretion by controlling glucose homeostasis through glucagon-like peptide 1 and glucose signaling pathway and maintains insulin secretion through calcium-dependent PKA activation leading to vesicle pool replenishment (PubMed:25403481). Also, allows PTGER3 to induce potentiation of PTGER4-mediated PLA2 secretion by switching from a negative to a positive regulation, during the IL1B induced-dedifferentiation of smooth muscle cells (By similarity).</text>
</comment>
<comment type="catalytic activity">
    <reaction evidence="4">
        <text>ATP = 3',5'-cyclic AMP + diphosphate</text>
        <dbReference type="Rhea" id="RHEA:15389"/>
        <dbReference type="ChEBI" id="CHEBI:30616"/>
        <dbReference type="ChEBI" id="CHEBI:33019"/>
        <dbReference type="ChEBI" id="CHEBI:58165"/>
        <dbReference type="EC" id="4.6.1.1"/>
    </reaction>
</comment>
<comment type="cofactor">
    <cofactor evidence="4">
        <name>Mg(2+)</name>
        <dbReference type="ChEBI" id="CHEBI:18420"/>
    </cofactor>
    <cofactor evidence="4">
        <name>Mn(2+)</name>
        <dbReference type="ChEBI" id="CHEBI:29035"/>
    </cofactor>
    <text evidence="2">Binds 2 magnesium ions per subunit. Is also active with manganese (in vitro).</text>
</comment>
<comment type="activity regulation">
    <text evidence="4 11">At rest, the N- and C-terminal domains interact, as part of a larger autoinhibitory complex, with calmodulin pre-associated at the N-terminal domain. Upon a calcium rise, calmodulin becomes calcium-saturated and subsequently binds to the C-terminal domain. Fully calcium-saturated calmodulin then leaves the N-terminal domain, binding solely to the C-terminal domain, and the whole autoinhibitory complex dissociates, resulting in activation of adenylate cyclase. As local calcium concentrations decrease, the calmodulin becomes calcium free and binds once more to the N-terminal domain, whereupon the whole system returns to rest with the re-association of the autoinhibitory complex (PubMed:14585998). In non-excitable cells, activated by capacitative calcium entry (CCE) through store-operated channels, namely through interaction with ORAI1 and STIM1; membrane raft and caveolae localization and membrane integrity are indispensable. CCE-mediated adenylate cyclase activity is decreased by AKAP5 and AKAP7. CCE-mediated adenylate cyclase activity is up-regulated by AKAP9 and the mitochondrially targeted AKAP1. In excitable cells, activated during membrane depolarization through L-type voltage-gated calcium channels (VGCC), leading to calcium entry; the L-type alpha subunit is sufficient. Activated via stimulation of the GLP1R. Synergistically activated by calcium/calmodulin and GNAS. Stimulated by forskolin. Inhibited by PKA directly bound to AKAP5 at membrane raft. Inhibition by acute activation of OPRM1 and activation by chronic activation of OPRM1 is mediated by pertussis toxin-sensitive G(i) and G(o) G alpha proteins and G beta-gamma dimer. Activity is inhibited by G beta-gamma dimer (By similarity).</text>
</comment>
<comment type="subunit">
    <text evidence="4 15">Homodimer; via transmembrane domain (PubMed:19158400). Monomer (PubMed:19158400). Heterodimer. Oligemer; via transmembrane domain. Interacts with PRKAR2A and AKAP5; inhibits adenylate cyclase activity through PKA phosphorylation. Interacts with PPP2CA and PPP2R1A; does not mediate the inhibitory effects of PKA on adenylate cyclase activity; interaction is dependent of catalytically active PPP2CA; antagonizes interaction with calmodulin. Interacts with AKAP5 (palmitoylated form); promotes the phosphorylation of ADCY8 after store-operated calcium entry (SOCE) stimulation at membrane raft. Interacts with ORAI1; interaction is calcium store depletion independent; interaction occurs in membrane raft; interaction increases markedly after store depletion; positively regulates SOCE-induced adenylate cyclase activity; contributes to the targeting of ADCY8 to discrete regions of the plasma membrane that are shielded from other calcium events. Interacts with STIM1. Interacts with actin; interaction is calcium independent; interaction is affected by calcium-calmodulin; interaction controls the distribution and regulation of ADCY8. Interacts with calmodulin; at rest, interacts via N-terminal domain; upon a calcium rise, calmodulin becomes calcium-saturated and subsequently binds to the C-terminal domain forming an autoinhibitory complex; fully calcium-saturated calmodulin leaves the N-terminal domain, binding solely to the C-terminal domain leading to dissociation of autoinhibitory complex and resulting in activation of adenylate cyclase; antagonizes interaction with PPP2CA; interaction is calcium dependent. Interacts with PPP2R5D (By similarity).</text>
</comment>
<comment type="subcellular location">
    <subcellularLocation>
        <location evidence="11">Cell membrane</location>
        <topology>Multi-pass membrane protein</topology>
    </subcellularLocation>
    <subcellularLocation>
        <location evidence="11">Basolateral cell membrane</location>
    </subcellularLocation>
    <subcellularLocation>
        <location evidence="11">Apical cell membrane</location>
    </subcellularLocation>
    <subcellularLocation>
        <location evidence="11">Synapse</location>
    </subcellularLocation>
    <subcellularLocation>
        <location evidence="11 12">Cell projection</location>
        <location evidence="11 12">Dendrite</location>
    </subcellularLocation>
    <subcellularLocation>
        <location evidence="11 12">Cell projection</location>
        <location evidence="11 12">Axon</location>
    </subcellularLocation>
    <subcellularLocation>
        <location evidence="12 14">Presynaptic cell membrane</location>
    </subcellularLocation>
    <subcellularLocation>
        <location evidence="12">Postsynaptic density</location>
    </subcellularLocation>
    <subcellularLocation>
        <location evidence="4">Membrane raft</location>
    </subcellularLocation>
    <subcellularLocation>
        <location evidence="4">Membrane</location>
        <location evidence="4">Coated pit</location>
    </subcellularLocation>
    <subcellularLocation>
        <location evidence="4">Cytoplasmic vesicle</location>
        <location evidence="4">Clathrin-coated vesicle membrane</location>
    </subcellularLocation>
    <subcellularLocation>
        <location evidence="4">Membrane</location>
        <location evidence="4">Caveola</location>
    </subcellularLocation>
    <text evidence="4 12">Localized to dendritic arbors (PubMed:17335981). Monomeric N-glycosylated species localizes in membrane raft. In contrast, monomeric unglycosylated forms are enriched in clathrin-coated pits and vesicles. Dimers are also localized outside of membrane rafts. Membrane raft localization and integrity is indispensable for CCE-stimulated adenylate cyclase activity (By similarity).</text>
</comment>
<comment type="tissue specificity">
    <text evidence="9 10 12">Abundantly expressed within the olfactory bulb, thalamus, habenula, CA1 region of the hippocampus, and hypothalamus (PubMed:10864938). Strongly expressed in pyramidal cells of CA1 and weakly in CA3 and the dentate gyrus. Strongly and homogeneously expressed in all cell layers of the anterior cingulate cortex (ACC). Widely expressed in the insular cortex. Weakly expressed in the spinal dorsal horn (PubMed:12441059). Abundantly present in the CA1/CA2 region in the hippocampus neonatal and intensifies by adulthood. Weakly expressed in the cerebellum at postnatal day 7 and decreased further by postnatal day 14 (PubMed:17335981).</text>
</comment>
<comment type="domain">
    <text evidence="4">The protein contains two modules with six transmembrane helices each; both are required for catalytic activity. Isolated N-terminal or C-terminal guanylate cyclase domains have no catalytic activity, but when they are brought together, enzyme activity is restored. The active site is at the interface of the two domains. Both contribute substrate-binding residues, but the catalytic metal ions are bound exclusively via the N-terminal guanylate cyclase domain. The two transmembrane clusters are necessary and suficient for the plasma membrane targeting and oligomers assembly. The N-terminal and C-terminal domains interact at rest as part of a larger autoinhibitory complex, with calmodulin pre-associated at the N-terminal domain; the binding is specifically inhibited by fully calcium-saturated calmodulin, resulting in activation of AC8.</text>
</comment>
<comment type="PTM">
    <text evidence="4">Phosphorylated by PKA; mediates inhibition of adenylate cyclase activity at membrane raft; does not influence either CALM1 or PPP2CA interaction with ADCY8.</text>
</comment>
<comment type="PTM">
    <text evidence="4">N-glycosylated; N-glycosylation is responsible for raft-targeting; is not necessary for CCE-stimulated adenylate cyclase activity.</text>
</comment>
<comment type="disruption phenotype">
    <text evidence="9">Adcy8 knockout mice are fertile and seem normal. However mice reveal a tendency for both male and female to be somewhat smaller from day of life 45 and 30 respectively while food intake is normal. From there, females remain 10-15% smaller. In contrast, male transiently grew more slowly between day of life 45 and 92, after which point differences are not significant. Mice are less nervous.</text>
</comment>
<comment type="similarity">
    <text evidence="6">Belongs to the adenylyl cyclase class-4/guanylyl cyclase family.</text>
</comment>
<keyword id="KW-0067">ATP-binding</keyword>
<keyword id="KW-0115">cAMP biosynthesis</keyword>
<keyword id="KW-1003">Cell membrane</keyword>
<keyword id="KW-0966">Cell projection</keyword>
<keyword id="KW-0168">Coated pit</keyword>
<keyword id="KW-0968">Cytoplasmic vesicle</keyword>
<keyword id="KW-0325">Glycoprotein</keyword>
<keyword id="KW-0456">Lyase</keyword>
<keyword id="KW-0460">Magnesium</keyword>
<keyword id="KW-0464">Manganese</keyword>
<keyword id="KW-0472">Membrane</keyword>
<keyword id="KW-0479">Metal-binding</keyword>
<keyword id="KW-0488">Methylation</keyword>
<keyword id="KW-0547">Nucleotide-binding</keyword>
<keyword id="KW-0597">Phosphoprotein</keyword>
<keyword id="KW-1185">Reference proteome</keyword>
<keyword id="KW-0677">Repeat</keyword>
<keyword id="KW-0770">Synapse</keyword>
<keyword id="KW-0812">Transmembrane</keyword>
<keyword id="KW-1133">Transmembrane helix</keyword>
<gene>
    <name evidence="20" type="primary">Adcy8</name>
</gene>
<feature type="chain" id="PRO_0000195706" description="Adenylate cyclase type 8">
    <location>
        <begin position="1"/>
        <end position="1249"/>
    </location>
</feature>
<feature type="topological domain" description="Cytoplasmic" evidence="5">
    <location>
        <begin position="1"/>
        <end position="180"/>
    </location>
</feature>
<feature type="transmembrane region" description="Helical" evidence="5">
    <location>
        <begin position="181"/>
        <end position="201"/>
    </location>
</feature>
<feature type="transmembrane region" description="Helical" evidence="5">
    <location>
        <begin position="210"/>
        <end position="230"/>
    </location>
</feature>
<feature type="transmembrane region" description="Helical" evidence="5">
    <location>
        <begin position="245"/>
        <end position="265"/>
    </location>
</feature>
<feature type="transmembrane region" description="Helical" evidence="5">
    <location>
        <begin position="272"/>
        <end position="292"/>
    </location>
</feature>
<feature type="transmembrane region" description="Helical" evidence="5">
    <location>
        <begin position="294"/>
        <end position="314"/>
    </location>
</feature>
<feature type="transmembrane region" description="Helical" evidence="5">
    <location>
        <begin position="319"/>
        <end position="339"/>
    </location>
</feature>
<feature type="topological domain" description="Cytoplasmic" evidence="5">
    <location>
        <begin position="340"/>
        <end position="713"/>
    </location>
</feature>
<feature type="transmembrane region" description="Helical" evidence="5">
    <location>
        <begin position="714"/>
        <end position="734"/>
    </location>
</feature>
<feature type="transmembrane region" description="Helical" evidence="5">
    <location>
        <begin position="736"/>
        <end position="756"/>
    </location>
</feature>
<feature type="transmembrane region" description="Helical" evidence="5">
    <location>
        <begin position="785"/>
        <end position="805"/>
    </location>
</feature>
<feature type="transmembrane region" description="Helical" evidence="5">
    <location>
        <begin position="829"/>
        <end position="849"/>
    </location>
</feature>
<feature type="transmembrane region" description="Helical" evidence="5">
    <location>
        <begin position="859"/>
        <end position="879"/>
    </location>
</feature>
<feature type="transmembrane region" description="Helical" evidence="5">
    <location>
        <begin position="892"/>
        <end position="912"/>
    </location>
</feature>
<feature type="topological domain" description="Cytoplasmic" evidence="5">
    <location>
        <begin position="913"/>
        <end position="1249"/>
    </location>
</feature>
<feature type="region of interest" description="Involved in ORAI1, STIM1, PPP2CA and PPP2R1A interaction" evidence="4">
    <location>
        <begin position="1"/>
        <end position="180"/>
    </location>
</feature>
<feature type="region of interest" description="Involved in AKAP5 and PRKAR2A interaction" evidence="4">
    <location>
        <begin position="1"/>
        <end position="107"/>
    </location>
</feature>
<feature type="region of interest" description="Disordered" evidence="7">
    <location>
        <begin position="14"/>
        <end position="33"/>
    </location>
</feature>
<feature type="region of interest" description="Disordered" evidence="7">
    <location>
        <begin position="50"/>
        <end position="118"/>
    </location>
</feature>
<feature type="region of interest" description="Involved in CALM1 interaction" evidence="4">
    <location>
        <begin position="1107"/>
        <end position="1249"/>
    </location>
</feature>
<feature type="region of interest" description="Required for both calcium stimulation and maintenance of autoinhibition" evidence="4">
    <location>
        <begin position="1198"/>
        <end position="1213"/>
    </location>
</feature>
<feature type="region of interest" description="Disordered" evidence="7">
    <location>
        <begin position="1221"/>
        <end position="1249"/>
    </location>
</feature>
<feature type="short sequence motif" description="Essential for CALM1 interaction" evidence="4">
    <location>
        <begin position="38"/>
        <end position="40"/>
    </location>
</feature>
<feature type="short sequence motif" description="Essential for CALM1 interaction" evidence="4">
    <location>
        <begin position="49"/>
        <end position="51"/>
    </location>
</feature>
<feature type="binding site" evidence="2">
    <location>
        <begin position="417"/>
        <end position="422"/>
    </location>
    <ligand>
        <name>ATP</name>
        <dbReference type="ChEBI" id="CHEBI:30616"/>
    </ligand>
</feature>
<feature type="binding site" evidence="6">
    <location>
        <position position="417"/>
    </location>
    <ligand>
        <name>Mg(2+)</name>
        <dbReference type="ChEBI" id="CHEBI:18420"/>
        <label>1</label>
        <note>catalytic</note>
    </ligand>
</feature>
<feature type="binding site" evidence="6">
    <location>
        <position position="417"/>
    </location>
    <ligand>
        <name>Mg(2+)</name>
        <dbReference type="ChEBI" id="CHEBI:18420"/>
        <label>2</label>
        <note>catalytic</note>
    </ligand>
</feature>
<feature type="binding site" evidence="6">
    <location>
        <position position="418"/>
    </location>
    <ligand>
        <name>Mg(2+)</name>
        <dbReference type="ChEBI" id="CHEBI:18420"/>
        <label>2</label>
        <note>catalytic</note>
    </ligand>
</feature>
<feature type="binding site" evidence="2">
    <location>
        <begin position="459"/>
        <end position="461"/>
    </location>
    <ligand>
        <name>ATP</name>
        <dbReference type="ChEBI" id="CHEBI:30616"/>
    </ligand>
</feature>
<feature type="binding site" evidence="6">
    <location>
        <position position="461"/>
    </location>
    <ligand>
        <name>Mg(2+)</name>
        <dbReference type="ChEBI" id="CHEBI:18420"/>
        <label>1</label>
        <note>catalytic</note>
    </ligand>
</feature>
<feature type="binding site" evidence="6">
    <location>
        <position position="461"/>
    </location>
    <ligand>
        <name>Mg(2+)</name>
        <dbReference type="ChEBI" id="CHEBI:18420"/>
        <label>2</label>
        <note>catalytic</note>
    </ligand>
</feature>
<feature type="binding site" evidence="2">
    <location>
        <position position="505"/>
    </location>
    <ligand>
        <name>ATP</name>
        <dbReference type="ChEBI" id="CHEBI:30616"/>
    </ligand>
</feature>
<feature type="binding site" evidence="1">
    <location>
        <position position="1032"/>
    </location>
    <ligand>
        <name>ATP</name>
        <dbReference type="ChEBI" id="CHEBI:30616"/>
    </ligand>
</feature>
<feature type="binding site" evidence="1">
    <location>
        <begin position="1107"/>
        <end position="1109"/>
    </location>
    <ligand>
        <name>ATP</name>
        <dbReference type="ChEBI" id="CHEBI:30616"/>
    </ligand>
</feature>
<feature type="binding site" evidence="1">
    <location>
        <begin position="1114"/>
        <end position="1118"/>
    </location>
    <ligand>
        <name>ATP</name>
        <dbReference type="ChEBI" id="CHEBI:30616"/>
    </ligand>
</feature>
<feature type="binding site" evidence="1">
    <location>
        <position position="1154"/>
    </location>
    <ligand>
        <name>ATP</name>
        <dbReference type="ChEBI" id="CHEBI:30616"/>
    </ligand>
</feature>
<feature type="site" description="Essential for autoinhibition maintenance by promoting interaction of the N and C termini" evidence="4">
    <location>
        <position position="1197"/>
    </location>
</feature>
<feature type="site" description="Essential for autoinhibition maintenance" evidence="4">
    <location>
        <position position="1198"/>
    </location>
</feature>
<feature type="site" description="Essential for autoinhibition maintenance by promoting interaction of the N and C termini" evidence="4">
    <location>
        <position position="1201"/>
    </location>
</feature>
<feature type="site" description="Essential for CALM1 interaction" evidence="4">
    <location>
        <position position="1203"/>
    </location>
</feature>
<feature type="site" description="Essential for CALM1 interaction" evidence="4">
    <location>
        <position position="1205"/>
    </location>
</feature>
<feature type="modified residue" description="Omega-N-methylarginine" evidence="22">
    <location>
        <position position="55"/>
    </location>
</feature>
<feature type="modified residue" description="Phosphoserine" evidence="21">
    <location>
        <position position="612"/>
    </location>
</feature>
<feature type="modified residue" description="Phosphoserine" evidence="21">
    <location>
        <position position="622"/>
    </location>
</feature>
<feature type="glycosylation site" description="N-linked (GlcNAc...) asparagine" evidence="5">
    <location>
        <position position="815"/>
    </location>
</feature>
<feature type="glycosylation site" description="N-linked (GlcNAc...) asparagine" evidence="5">
    <location>
        <position position="819"/>
    </location>
</feature>
<feature type="glycosylation site" description="N-linked (GlcNAc...) asparagine" evidence="5">
    <location>
        <position position="886"/>
    </location>
</feature>
<feature type="sequence conflict" description="In Ref. 1; AAB41885." evidence="19" ref="1">
    <original>A</original>
    <variation>V</variation>
    <location>
        <position position="24"/>
    </location>
</feature>
<feature type="sequence conflict" description="In Ref. 1; AAB41885." evidence="19" ref="1">
    <original>G</original>
    <variation>C</variation>
    <location>
        <position position="59"/>
    </location>
</feature>
<feature type="sequence conflict" description="In Ref. 1; AAB41885." evidence="19" ref="1">
    <original>L</original>
    <variation>V</variation>
    <location>
        <position position="849"/>
    </location>
</feature>
<organism>
    <name type="scientific">Mus musculus</name>
    <name type="common">Mouse</name>
    <dbReference type="NCBI Taxonomy" id="10090"/>
    <lineage>
        <taxon>Eukaryota</taxon>
        <taxon>Metazoa</taxon>
        <taxon>Chordata</taxon>
        <taxon>Craniata</taxon>
        <taxon>Vertebrata</taxon>
        <taxon>Euteleostomi</taxon>
        <taxon>Mammalia</taxon>
        <taxon>Eutheria</taxon>
        <taxon>Euarchontoglires</taxon>
        <taxon>Glires</taxon>
        <taxon>Rodentia</taxon>
        <taxon>Myomorpha</taxon>
        <taxon>Muroidea</taxon>
        <taxon>Muridae</taxon>
        <taxon>Murinae</taxon>
        <taxon>Mus</taxon>
        <taxon>Mus</taxon>
    </lineage>
</organism>
<protein>
    <recommendedName>
        <fullName evidence="19">Adenylate cyclase type 8</fullName>
        <ecNumber evidence="4">4.6.1.1</ecNumber>
    </recommendedName>
    <alternativeName>
        <fullName>ATP pyrophosphate-lyase 8</fullName>
    </alternativeName>
    <alternativeName>
        <fullName evidence="3">Adenylate cyclase type VIII</fullName>
    </alternativeName>
    <alternativeName>
        <fullName evidence="4">Adenylyl cyclase 8</fullName>
    </alternativeName>
    <alternativeName>
        <fullName>Ca(2+)/calmodulin-activated adenylyl cyclase</fullName>
    </alternativeName>
</protein>
<reference key="1">
    <citation type="submission" date="1997-02" db="EMBL/GenBank/DDBJ databases">
        <title>Cloning of mouse adenylyl cyclase type 8.</title>
        <authorList>
            <person name="Premont R.T."/>
        </authorList>
    </citation>
    <scope>NUCLEOTIDE SEQUENCE [MRNA]</scope>
    <source>
        <strain>BALB/cJ</strain>
        <tissue>Brain</tissue>
    </source>
</reference>
<reference key="2">
    <citation type="journal article" date="2009" name="PLoS Biol.">
        <title>Lineage-specific biology revealed by a finished genome assembly of the mouse.</title>
        <authorList>
            <person name="Church D.M."/>
            <person name="Goodstadt L."/>
            <person name="Hillier L.W."/>
            <person name="Zody M.C."/>
            <person name="Goldstein S."/>
            <person name="She X."/>
            <person name="Bult C.J."/>
            <person name="Agarwala R."/>
            <person name="Cherry J.L."/>
            <person name="DiCuccio M."/>
            <person name="Hlavina W."/>
            <person name="Kapustin Y."/>
            <person name="Meric P."/>
            <person name="Maglott D."/>
            <person name="Birtle Z."/>
            <person name="Marques A.C."/>
            <person name="Graves T."/>
            <person name="Zhou S."/>
            <person name="Teague B."/>
            <person name="Potamousis K."/>
            <person name="Churas C."/>
            <person name="Place M."/>
            <person name="Herschleb J."/>
            <person name="Runnheim R."/>
            <person name="Forrest D."/>
            <person name="Amos-Landgraf J."/>
            <person name="Schwartz D.C."/>
            <person name="Cheng Z."/>
            <person name="Lindblad-Toh K."/>
            <person name="Eichler E.E."/>
            <person name="Ponting C.P."/>
        </authorList>
    </citation>
    <scope>NUCLEOTIDE SEQUENCE [LARGE SCALE GENOMIC DNA]</scope>
    <source>
        <strain>C57BL/6J</strain>
    </source>
</reference>
<reference key="3">
    <citation type="submission" date="2005-07" db="EMBL/GenBank/DDBJ databases">
        <authorList>
            <person name="Mural R.J."/>
            <person name="Adams M.D."/>
            <person name="Myers E.W."/>
            <person name="Smith H.O."/>
            <person name="Venter J.C."/>
        </authorList>
    </citation>
    <scope>NUCLEOTIDE SEQUENCE [LARGE SCALE GENOMIC DNA]</scope>
</reference>
<reference key="4">
    <citation type="journal article" date="1999" name="Neuron">
        <title>Calcium-stimulated adenylyl cyclase activity is critical for hippocampus-dependent long-term memory and late phase LTP.</title>
        <authorList>
            <person name="Wong S.T."/>
            <person name="Athos J."/>
            <person name="Figueroa X.A."/>
            <person name="Pineda V.V."/>
            <person name="Schaefer M.L."/>
            <person name="Chavkin C.C."/>
            <person name="Muglia L.J."/>
            <person name="Storm D.R."/>
        </authorList>
    </citation>
    <scope>FUNCTION</scope>
</reference>
<reference key="5">
    <citation type="journal article" date="2000" name="J. Neurosci.">
        <title>Altered stress-induced anxiety in adenylyl cyclase type VIII-deficient mice.</title>
        <authorList>
            <person name="Schaefer M.L."/>
            <person name="Wong S.T."/>
            <person name="Wozniak D.F."/>
            <person name="Muglia L.M."/>
            <person name="Liauw J.A."/>
            <person name="Zhuo M."/>
            <person name="Nardi A."/>
            <person name="Hartman R.E."/>
            <person name="Vogt S.K."/>
            <person name="Luedke C.E."/>
            <person name="Storm D.R."/>
            <person name="Muglia L.J."/>
        </authorList>
    </citation>
    <scope>TISSUE SPECIFICITY</scope>
    <scope>DISRUPTION PHENOTYPE</scope>
    <scope>FUNCTION</scope>
</reference>
<reference key="6">
    <citation type="journal article" date="2002" name="Neuron">
        <title>Genetic elimination of behavioral sensitization in mice lacking calmodulin-stimulated adenylyl cyclases.</title>
        <authorList>
            <person name="Wei F."/>
            <person name="Qiu C.S."/>
            <person name="Kim S.J."/>
            <person name="Muglia L."/>
            <person name="Maas J.W."/>
            <person name="Pineda V.V."/>
            <person name="Xu H.M."/>
            <person name="Chen Z.F."/>
            <person name="Storm D.R."/>
            <person name="Muglia L.J."/>
            <person name="Zhuo M."/>
        </authorList>
    </citation>
    <scope>TISSUE SPECIFICITY</scope>
    <scope>FUNCTION</scope>
</reference>
<reference key="7">
    <citation type="journal article" date="2003" name="J. Neurosci.">
        <title>Type 8 adenylyl cyclase is targeted to excitatory synapses and required for mossy fiber long-term potentiation.</title>
        <authorList>
            <person name="Wang H."/>
            <person name="Pineda V.V."/>
            <person name="Chan G.C."/>
            <person name="Wong S.T."/>
            <person name="Muglia L.J."/>
            <person name="Storm D.R."/>
        </authorList>
    </citation>
    <scope>SUBCELLULAR LOCATION</scope>
    <scope>FUNCTION</scope>
    <scope>ACTIVITY REGULATION</scope>
</reference>
<reference key="8">
    <citation type="journal article" date="2007" name="Neuroscience">
        <title>Distinct regional and subcellular localization of adenylyl cyclases type 1 and 8 in mouse brain.</title>
        <authorList>
            <person name="Conti A.C."/>
            <person name="Maas J.W. Jr."/>
            <person name="Muglia L.M."/>
            <person name="Dave B.A."/>
            <person name="Vogt S.K."/>
            <person name="Tran T.T."/>
            <person name="Rayhel E.J."/>
            <person name="Muglia L.J."/>
        </authorList>
    </citation>
    <scope>TISSUE SPECIFICITY</scope>
    <scope>SUBCELLULAR LOCATION</scope>
</reference>
<reference key="9">
    <citation type="journal article" date="2008" name="Biol. Psychiatry">
        <title>Distinct roles of adenylyl cyclases 1 and 8 in opiate dependence: behavioral, electrophysiological, and molecular studies.</title>
        <authorList>
            <person name="Zachariou V."/>
            <person name="Liu R."/>
            <person name="LaPlant Q."/>
            <person name="Xiao G."/>
            <person name="Renthal W."/>
            <person name="Chan G.C."/>
            <person name="Storm D.R."/>
            <person name="Aghajanian G."/>
            <person name="Nestler E.J."/>
        </authorList>
    </citation>
    <scope>FUNCTION</scope>
</reference>
<reference key="10">
    <citation type="journal article" date="2008" name="J. Neurosci.">
        <title>Ca-stimulated type 8 adenylyl cyclase is required for rapid acquisition of novel spatial information and for working/episodic-like memory.</title>
        <authorList>
            <person name="Zhang M."/>
            <person name="Moon C."/>
            <person name="Chan G.C."/>
            <person name="Yang L."/>
            <person name="Zheng F."/>
            <person name="Conti A.C."/>
            <person name="Muglia L."/>
            <person name="Muglia L.J."/>
            <person name="Storm D.R."/>
            <person name="Wang H."/>
        </authorList>
    </citation>
    <scope>FUNCTION</scope>
    <scope>SUBCELLULAR LOCATION</scope>
</reference>
<reference key="11">
    <citation type="journal article" date="2009" name="Am. J. Physiol.">
        <title>Insights into the residence in lipid rafts of adenylyl cyclase AC8 and its regulation by capacitative calcium entry.</title>
        <authorList>
            <person name="Pagano M."/>
            <person name="Clynes M.A."/>
            <person name="Masada N."/>
            <person name="Ciruela A."/>
            <person name="Ayling L.J."/>
            <person name="Wachten S."/>
            <person name="Cooper D.M."/>
        </authorList>
    </citation>
    <scope>SUBUNIT</scope>
</reference>
<reference key="12">
    <citation type="journal article" date="2010" name="Cell">
        <title>A tissue-specific atlas of mouse protein phosphorylation and expression.</title>
        <authorList>
            <person name="Huttlin E.L."/>
            <person name="Jedrychowski M.P."/>
            <person name="Elias J.E."/>
            <person name="Goswami T."/>
            <person name="Rad R."/>
            <person name="Beausoleil S.A."/>
            <person name="Villen J."/>
            <person name="Haas W."/>
            <person name="Sowa M.E."/>
            <person name="Gygi S.P."/>
        </authorList>
    </citation>
    <scope>PHOSPHORYLATION [LARGE SCALE ANALYSIS] AT SER-612 AND SER-622</scope>
    <scope>IDENTIFICATION BY MASS SPECTROMETRY [LARGE SCALE ANALYSIS]</scope>
    <source>
        <tissue>Brain</tissue>
        <tissue>Lung</tissue>
    </source>
</reference>
<reference key="13">
    <citation type="journal article" date="2010" name="Neuroscience">
        <title>Functional role of Calcium-stimulated adenylyl cyclase 8 in adaptations to psychological stressors in the mouse: implications for mood disorders.</title>
        <authorList>
            <person name="Razzoli M."/>
            <person name="Andreoli M."/>
            <person name="Maraia G."/>
            <person name="Di Francesco C."/>
            <person name="Arban R."/>
        </authorList>
    </citation>
    <scope>FUNCTION</scope>
</reference>
<reference key="14">
    <citation type="journal article" date="2014" name="Mol. Cell. Proteomics">
        <title>Immunoaffinity enrichment and mass spectrometry analysis of protein methylation.</title>
        <authorList>
            <person name="Guo A."/>
            <person name="Gu H."/>
            <person name="Zhou J."/>
            <person name="Mulhern D."/>
            <person name="Wang Y."/>
            <person name="Lee K.A."/>
            <person name="Yang V."/>
            <person name="Aguiar M."/>
            <person name="Kornhauser J."/>
            <person name="Jia X."/>
            <person name="Ren J."/>
            <person name="Beausoleil S.A."/>
            <person name="Silva J.C."/>
            <person name="Vemulapalli V."/>
            <person name="Bedford M.T."/>
            <person name="Comb M.J."/>
        </authorList>
    </citation>
    <scope>METHYLATION [LARGE SCALE ANALYSIS] AT ARG-55</scope>
    <scope>IDENTIFICATION BY MASS SPECTROMETRY [LARGE SCALE ANALYSIS]</scope>
    <source>
        <tissue>Brain</tissue>
    </source>
</reference>
<reference key="15">
    <citation type="journal article" date="2015" name="Diabetologia">
        <title>Multilevel control of glucose homeostasis by adenylyl cyclase 8.</title>
        <authorList>
            <person name="Raoux M."/>
            <person name="Vacher P."/>
            <person name="Papin J."/>
            <person name="Picard A."/>
            <person name="Kostrzewa E."/>
            <person name="Devin A."/>
            <person name="Gaitan J."/>
            <person name="Limon I."/>
            <person name="Kas M.J."/>
            <person name="Magnan C."/>
            <person name="Lang J."/>
        </authorList>
    </citation>
    <scope>FUNCTION</scope>
</reference>
<reference key="16">
    <citation type="journal article" date="2016" name="Mol. Brain">
        <title>Calcium activated adenylyl cyclase AC8 but not AC1 is required for prolonged behavioral anxiety.</title>
        <authorList>
            <person name="Bernabucci M."/>
            <person name="Zhuo M."/>
        </authorList>
    </citation>
    <scope>FUNCTION</scope>
</reference>
<name>ADCY8_MOUSE</name>
<dbReference type="EC" id="4.6.1.1" evidence="4"/>
<dbReference type="EMBL" id="U85021">
    <property type="protein sequence ID" value="AAB41885.1"/>
    <property type="molecule type" value="mRNA"/>
</dbReference>
<dbReference type="EMBL" id="AC116996">
    <property type="status" value="NOT_ANNOTATED_CDS"/>
    <property type="molecule type" value="Genomic_DNA"/>
</dbReference>
<dbReference type="EMBL" id="AC160934">
    <property type="status" value="NOT_ANNOTATED_CDS"/>
    <property type="molecule type" value="Genomic_DNA"/>
</dbReference>
<dbReference type="EMBL" id="CH466545">
    <property type="protein sequence ID" value="EDL29360.1"/>
    <property type="molecule type" value="Genomic_DNA"/>
</dbReference>
<dbReference type="EMBL" id="CH466545">
    <property type="protein sequence ID" value="EDL29361.1"/>
    <property type="molecule type" value="Genomic_DNA"/>
</dbReference>
<dbReference type="CCDS" id="CCDS27506.1"/>
<dbReference type="RefSeq" id="NP_033753.2">
    <property type="nucleotide sequence ID" value="NM_009623.2"/>
</dbReference>
<dbReference type="SMR" id="P97490"/>
<dbReference type="BioGRID" id="197977">
    <property type="interactions" value="4"/>
</dbReference>
<dbReference type="CORUM" id="P97490"/>
<dbReference type="FunCoup" id="P97490">
    <property type="interactions" value="1137"/>
</dbReference>
<dbReference type="STRING" id="10090.ENSMUSP00000023007"/>
<dbReference type="GlyCosmos" id="P97490">
    <property type="glycosylation" value="3 sites, No reported glycans"/>
</dbReference>
<dbReference type="GlyGen" id="P97490">
    <property type="glycosylation" value="5 sites, 1 N-linked glycan (1 site)"/>
</dbReference>
<dbReference type="iPTMnet" id="P97490"/>
<dbReference type="PhosphoSitePlus" id="P97490"/>
<dbReference type="PaxDb" id="10090-ENSMUSP00000023007"/>
<dbReference type="PeptideAtlas" id="P97490"/>
<dbReference type="ProteomicsDB" id="285725"/>
<dbReference type="Antibodypedia" id="4355">
    <property type="antibodies" value="249 antibodies from 31 providers"/>
</dbReference>
<dbReference type="DNASU" id="11514"/>
<dbReference type="Ensembl" id="ENSMUST00000023007.7">
    <property type="protein sequence ID" value="ENSMUSP00000023007.6"/>
    <property type="gene ID" value="ENSMUSG00000022376.9"/>
</dbReference>
<dbReference type="GeneID" id="11514"/>
<dbReference type="KEGG" id="mmu:11514"/>
<dbReference type="UCSC" id="uc007vzo.1">
    <property type="organism name" value="mouse"/>
</dbReference>
<dbReference type="AGR" id="MGI:1341110"/>
<dbReference type="CTD" id="114"/>
<dbReference type="MGI" id="MGI:1341110">
    <property type="gene designation" value="Adcy8"/>
</dbReference>
<dbReference type="VEuPathDB" id="HostDB:ENSMUSG00000022376"/>
<dbReference type="eggNOG" id="KOG3619">
    <property type="taxonomic scope" value="Eukaryota"/>
</dbReference>
<dbReference type="GeneTree" id="ENSGT00940000158742"/>
<dbReference type="HOGENOM" id="CLU_001072_3_0_1"/>
<dbReference type="InParanoid" id="P97490"/>
<dbReference type="OMA" id="HRTIFIC"/>
<dbReference type="OrthoDB" id="10006362at2759"/>
<dbReference type="PhylomeDB" id="P97490"/>
<dbReference type="TreeFam" id="TF313845"/>
<dbReference type="BRENDA" id="4.6.1.1">
    <property type="organism ID" value="3474"/>
</dbReference>
<dbReference type="Reactome" id="R-MMU-163615">
    <property type="pathway name" value="PKA activation"/>
</dbReference>
<dbReference type="Reactome" id="R-MMU-170660">
    <property type="pathway name" value="Adenylate cyclase activating pathway"/>
</dbReference>
<dbReference type="Reactome" id="R-MMU-170670">
    <property type="pathway name" value="Adenylate cyclase inhibitory pathway"/>
</dbReference>
<dbReference type="Reactome" id="R-MMU-418597">
    <property type="pathway name" value="G alpha (z) signalling events"/>
</dbReference>
<dbReference type="Reactome" id="R-MMU-5610787">
    <property type="pathway name" value="Hedgehog 'off' state"/>
</dbReference>
<dbReference type="BioGRID-ORCS" id="11514">
    <property type="hits" value="0 hits in 78 CRISPR screens"/>
</dbReference>
<dbReference type="PRO" id="PR:P97490"/>
<dbReference type="Proteomes" id="UP000000589">
    <property type="component" value="Chromosome 15"/>
</dbReference>
<dbReference type="RNAct" id="P97490">
    <property type="molecule type" value="protein"/>
</dbReference>
<dbReference type="Bgee" id="ENSMUSG00000022376">
    <property type="expression patterns" value="Expressed in ventral lateral nucleus of thalamus and 135 other cell types or tissues"/>
</dbReference>
<dbReference type="ExpressionAtlas" id="P97490">
    <property type="expression patterns" value="baseline and differential"/>
</dbReference>
<dbReference type="GO" id="GO:0016324">
    <property type="term" value="C:apical plasma membrane"/>
    <property type="evidence" value="ECO:0000314"/>
    <property type="project" value="UniProtKB"/>
</dbReference>
<dbReference type="GO" id="GO:0030424">
    <property type="term" value="C:axon"/>
    <property type="evidence" value="ECO:0000314"/>
    <property type="project" value="UniProtKB"/>
</dbReference>
<dbReference type="GO" id="GO:0016323">
    <property type="term" value="C:basolateral plasma membrane"/>
    <property type="evidence" value="ECO:0000314"/>
    <property type="project" value="UniProtKB"/>
</dbReference>
<dbReference type="GO" id="GO:0005901">
    <property type="term" value="C:caveola"/>
    <property type="evidence" value="ECO:0000250"/>
    <property type="project" value="UniProtKB"/>
</dbReference>
<dbReference type="GO" id="GO:0005905">
    <property type="term" value="C:clathrin-coated pit"/>
    <property type="evidence" value="ECO:0000250"/>
    <property type="project" value="UniProtKB"/>
</dbReference>
<dbReference type="GO" id="GO:0030665">
    <property type="term" value="C:clathrin-coated vesicle membrane"/>
    <property type="evidence" value="ECO:0007669"/>
    <property type="project" value="UniProtKB-SubCell"/>
</dbReference>
<dbReference type="GO" id="GO:0030425">
    <property type="term" value="C:dendrite"/>
    <property type="evidence" value="ECO:0000314"/>
    <property type="project" value="UniProtKB"/>
</dbReference>
<dbReference type="GO" id="GO:0060076">
    <property type="term" value="C:excitatory synapse"/>
    <property type="evidence" value="ECO:0000314"/>
    <property type="project" value="UniProtKB"/>
</dbReference>
<dbReference type="GO" id="GO:0098978">
    <property type="term" value="C:glutamatergic synapse"/>
    <property type="evidence" value="ECO:0000314"/>
    <property type="project" value="SynGO"/>
</dbReference>
<dbReference type="GO" id="GO:0098686">
    <property type="term" value="C:hippocampal mossy fiber to CA3 synapse"/>
    <property type="evidence" value="ECO:0000314"/>
    <property type="project" value="SynGO"/>
</dbReference>
<dbReference type="GO" id="GO:0045121">
    <property type="term" value="C:membrane raft"/>
    <property type="evidence" value="ECO:0000250"/>
    <property type="project" value="UniProtKB"/>
</dbReference>
<dbReference type="GO" id="GO:0032809">
    <property type="term" value="C:neuronal cell body membrane"/>
    <property type="evidence" value="ECO:0000314"/>
    <property type="project" value="UniProtKB"/>
</dbReference>
<dbReference type="GO" id="GO:0005886">
    <property type="term" value="C:plasma membrane"/>
    <property type="evidence" value="ECO:0000314"/>
    <property type="project" value="MGI"/>
</dbReference>
<dbReference type="GO" id="GO:0044853">
    <property type="term" value="C:plasma membrane raft"/>
    <property type="evidence" value="ECO:0000250"/>
    <property type="project" value="UniProtKB"/>
</dbReference>
<dbReference type="GO" id="GO:0014069">
    <property type="term" value="C:postsynaptic density"/>
    <property type="evidence" value="ECO:0000314"/>
    <property type="project" value="UniProtKB"/>
</dbReference>
<dbReference type="GO" id="GO:0048786">
    <property type="term" value="C:presynaptic active zone"/>
    <property type="evidence" value="ECO:0000314"/>
    <property type="project" value="UniProtKB"/>
</dbReference>
<dbReference type="GO" id="GO:0042734">
    <property type="term" value="C:presynaptic membrane"/>
    <property type="evidence" value="ECO:0000314"/>
    <property type="project" value="SynGO"/>
</dbReference>
<dbReference type="GO" id="GO:0098685">
    <property type="term" value="C:Schaffer collateral - CA1 synapse"/>
    <property type="evidence" value="ECO:0000314"/>
    <property type="project" value="SynGO"/>
</dbReference>
<dbReference type="GO" id="GO:0003779">
    <property type="term" value="F:actin binding"/>
    <property type="evidence" value="ECO:0000250"/>
    <property type="project" value="UniProtKB"/>
</dbReference>
<dbReference type="GO" id="GO:0004016">
    <property type="term" value="F:adenylate cyclase activity"/>
    <property type="evidence" value="ECO:0000315"/>
    <property type="project" value="MGI"/>
</dbReference>
<dbReference type="GO" id="GO:0005524">
    <property type="term" value="F:ATP binding"/>
    <property type="evidence" value="ECO:0007669"/>
    <property type="project" value="UniProtKB-KW"/>
</dbReference>
<dbReference type="GO" id="GO:0008294">
    <property type="term" value="F:calcium- and calmodulin-responsive adenylate cyclase activity"/>
    <property type="evidence" value="ECO:0000315"/>
    <property type="project" value="UniProtKB"/>
</dbReference>
<dbReference type="GO" id="GO:0005516">
    <property type="term" value="F:calmodulin binding"/>
    <property type="evidence" value="ECO:0000250"/>
    <property type="project" value="UniProtKB"/>
</dbReference>
<dbReference type="GO" id="GO:0046872">
    <property type="term" value="F:metal ion binding"/>
    <property type="evidence" value="ECO:0007669"/>
    <property type="project" value="UniProtKB-KW"/>
</dbReference>
<dbReference type="GO" id="GO:0046983">
    <property type="term" value="F:protein dimerization activity"/>
    <property type="evidence" value="ECO:0000250"/>
    <property type="project" value="UniProtKB"/>
</dbReference>
<dbReference type="GO" id="GO:0046982">
    <property type="term" value="F:protein heterodimerization activity"/>
    <property type="evidence" value="ECO:0000250"/>
    <property type="project" value="UniProtKB"/>
</dbReference>
<dbReference type="GO" id="GO:0042803">
    <property type="term" value="F:protein homodimerization activity"/>
    <property type="evidence" value="ECO:0000250"/>
    <property type="project" value="UniProtKB"/>
</dbReference>
<dbReference type="GO" id="GO:0051721">
    <property type="term" value="F:protein phosphatase 2A binding"/>
    <property type="evidence" value="ECO:0000250"/>
    <property type="project" value="UniProtKB"/>
</dbReference>
<dbReference type="GO" id="GO:0034199">
    <property type="term" value="P:activation of protein kinase A activity"/>
    <property type="evidence" value="ECO:0000250"/>
    <property type="project" value="UniProtKB"/>
</dbReference>
<dbReference type="GO" id="GO:0007189">
    <property type="term" value="P:adenylate cyclase-activating G protein-coupled receptor signaling pathway"/>
    <property type="evidence" value="ECO:0000314"/>
    <property type="project" value="MGI"/>
</dbReference>
<dbReference type="GO" id="GO:0006171">
    <property type="term" value="P:cAMP biosynthetic process"/>
    <property type="evidence" value="ECO:0007669"/>
    <property type="project" value="UniProtKB-KW"/>
</dbReference>
<dbReference type="GO" id="GO:0071277">
    <property type="term" value="P:cellular response to calcium ion"/>
    <property type="evidence" value="ECO:0000250"/>
    <property type="project" value="UniProtKB"/>
</dbReference>
<dbReference type="GO" id="GO:1904322">
    <property type="term" value="P:cellular response to forskolin"/>
    <property type="evidence" value="ECO:0000250"/>
    <property type="project" value="UniProtKB"/>
</dbReference>
<dbReference type="GO" id="GO:0071377">
    <property type="term" value="P:cellular response to glucagon stimulus"/>
    <property type="evidence" value="ECO:0000314"/>
    <property type="project" value="MGI"/>
</dbReference>
<dbReference type="GO" id="GO:0071333">
    <property type="term" value="P:cellular response to glucose stimulus"/>
    <property type="evidence" value="ECO:0000250"/>
    <property type="project" value="UniProtKB"/>
</dbReference>
<dbReference type="GO" id="GO:0071315">
    <property type="term" value="P:cellular response to morphine"/>
    <property type="evidence" value="ECO:0000315"/>
    <property type="project" value="UniProtKB"/>
</dbReference>
<dbReference type="GO" id="GO:0038003">
    <property type="term" value="P:G protein-coupled opioid receptor signaling pathway"/>
    <property type="evidence" value="ECO:0000250"/>
    <property type="project" value="UniProtKB"/>
</dbReference>
<dbReference type="GO" id="GO:0042593">
    <property type="term" value="P:glucose homeostasis"/>
    <property type="evidence" value="ECO:0000315"/>
    <property type="project" value="UniProtKB"/>
</dbReference>
<dbReference type="GO" id="GO:0010255">
    <property type="term" value="P:glucose mediated signaling pathway"/>
    <property type="evidence" value="ECO:0000315"/>
    <property type="project" value="UniProtKB"/>
</dbReference>
<dbReference type="GO" id="GO:0035556">
    <property type="term" value="P:intracellular signal transduction"/>
    <property type="evidence" value="ECO:0007669"/>
    <property type="project" value="InterPro"/>
</dbReference>
<dbReference type="GO" id="GO:0007626">
    <property type="term" value="P:locomotory behavior"/>
    <property type="evidence" value="ECO:0000315"/>
    <property type="project" value="UniProtKB"/>
</dbReference>
<dbReference type="GO" id="GO:0007616">
    <property type="term" value="P:long-term memory"/>
    <property type="evidence" value="ECO:0000316"/>
    <property type="project" value="MGI"/>
</dbReference>
<dbReference type="GO" id="GO:0007613">
    <property type="term" value="P:memory"/>
    <property type="evidence" value="ECO:0000315"/>
    <property type="project" value="UniProtKB"/>
</dbReference>
<dbReference type="GO" id="GO:0050804">
    <property type="term" value="P:modulation of chemical synaptic transmission"/>
    <property type="evidence" value="ECO:0000314"/>
    <property type="project" value="SynGO"/>
</dbReference>
<dbReference type="GO" id="GO:0150076">
    <property type="term" value="P:neuroinflammatory response"/>
    <property type="evidence" value="ECO:0000315"/>
    <property type="project" value="UniProtKB"/>
</dbReference>
<dbReference type="GO" id="GO:0032793">
    <property type="term" value="P:positive regulation of CREB transcription factor activity"/>
    <property type="evidence" value="ECO:0000315"/>
    <property type="project" value="UniProtKB"/>
</dbReference>
<dbReference type="GO" id="GO:0007204">
    <property type="term" value="P:positive regulation of cytosolic calcium ion concentration"/>
    <property type="evidence" value="ECO:0000250"/>
    <property type="project" value="UniProtKB"/>
</dbReference>
<dbReference type="GO" id="GO:0032024">
    <property type="term" value="P:positive regulation of insulin secretion"/>
    <property type="evidence" value="ECO:0000314"/>
    <property type="project" value="MGI"/>
</dbReference>
<dbReference type="GO" id="GO:0035774">
    <property type="term" value="P:positive regulation of insulin secretion involved in cellular response to glucose stimulus"/>
    <property type="evidence" value="ECO:0000315"/>
    <property type="project" value="UniProtKB"/>
</dbReference>
<dbReference type="GO" id="GO:1900454">
    <property type="term" value="P:positive regulation of long-term synaptic depression"/>
    <property type="evidence" value="ECO:0000315"/>
    <property type="project" value="UniProtKB"/>
</dbReference>
<dbReference type="GO" id="GO:1900273">
    <property type="term" value="P:positive regulation of long-term synaptic potentiation"/>
    <property type="evidence" value="ECO:0000315"/>
    <property type="project" value="UniProtKB"/>
</dbReference>
<dbReference type="GO" id="GO:0031915">
    <property type="term" value="P:positive regulation of synaptic plasticity"/>
    <property type="evidence" value="ECO:0000315"/>
    <property type="project" value="UniProtKB"/>
</dbReference>
<dbReference type="GO" id="GO:0051259">
    <property type="term" value="P:protein complex oligomerization"/>
    <property type="evidence" value="ECO:0000250"/>
    <property type="project" value="UniProtKB"/>
</dbReference>
<dbReference type="GO" id="GO:0051260">
    <property type="term" value="P:protein homooligomerization"/>
    <property type="evidence" value="ECO:0000250"/>
    <property type="project" value="UniProtKB"/>
</dbReference>
<dbReference type="GO" id="GO:0080135">
    <property type="term" value="P:regulation of cellular response to stress"/>
    <property type="evidence" value="ECO:0000315"/>
    <property type="project" value="UniProtKB"/>
</dbReference>
<dbReference type="GO" id="GO:0051480">
    <property type="term" value="P:regulation of cytosolic calcium ion concentration"/>
    <property type="evidence" value="ECO:0000315"/>
    <property type="project" value="UniProtKB"/>
</dbReference>
<dbReference type="CDD" id="cd07302">
    <property type="entry name" value="CHD"/>
    <property type="match status" value="2"/>
</dbReference>
<dbReference type="FunFam" id="3.30.70.1230:FF:000001">
    <property type="entry name" value="Adenylate cyclase"/>
    <property type="match status" value="1"/>
</dbReference>
<dbReference type="FunFam" id="3.30.70.1230:FF:000011">
    <property type="entry name" value="Adenylate cyclase"/>
    <property type="match status" value="1"/>
</dbReference>
<dbReference type="Gene3D" id="3.30.70.1230">
    <property type="entry name" value="Nucleotide cyclase"/>
    <property type="match status" value="2"/>
</dbReference>
<dbReference type="InterPro" id="IPR001054">
    <property type="entry name" value="A/G_cyclase"/>
</dbReference>
<dbReference type="InterPro" id="IPR018297">
    <property type="entry name" value="A/G_cyclase_CS"/>
</dbReference>
<dbReference type="InterPro" id="IPR032628">
    <property type="entry name" value="AC_N"/>
</dbReference>
<dbReference type="InterPro" id="IPR030672">
    <property type="entry name" value="Adcy"/>
</dbReference>
<dbReference type="InterPro" id="IPR009398">
    <property type="entry name" value="Adcy_conserved_dom"/>
</dbReference>
<dbReference type="InterPro" id="IPR029787">
    <property type="entry name" value="Nucleotide_cyclase"/>
</dbReference>
<dbReference type="PANTHER" id="PTHR45627">
    <property type="entry name" value="ADENYLATE CYCLASE TYPE 1"/>
    <property type="match status" value="1"/>
</dbReference>
<dbReference type="PANTHER" id="PTHR45627:SF1">
    <property type="entry name" value="ADENYLATE CYCLASE TYPE 8"/>
    <property type="match status" value="1"/>
</dbReference>
<dbReference type="Pfam" id="PF16214">
    <property type="entry name" value="AC_N"/>
    <property type="match status" value="1"/>
</dbReference>
<dbReference type="Pfam" id="PF06327">
    <property type="entry name" value="Adcy_cons_dom"/>
    <property type="match status" value="1"/>
</dbReference>
<dbReference type="Pfam" id="PF00211">
    <property type="entry name" value="Guanylate_cyc"/>
    <property type="match status" value="2"/>
</dbReference>
<dbReference type="PIRSF" id="PIRSF039050">
    <property type="entry name" value="Ade_cyc"/>
    <property type="match status" value="1"/>
</dbReference>
<dbReference type="SMART" id="SM00044">
    <property type="entry name" value="CYCc"/>
    <property type="match status" value="2"/>
</dbReference>
<dbReference type="SUPFAM" id="SSF55073">
    <property type="entry name" value="Nucleotide cyclase"/>
    <property type="match status" value="2"/>
</dbReference>
<dbReference type="PROSITE" id="PS00452">
    <property type="entry name" value="GUANYLATE_CYCLASE_1"/>
    <property type="match status" value="2"/>
</dbReference>
<dbReference type="PROSITE" id="PS50125">
    <property type="entry name" value="GUANYLATE_CYCLASE_2"/>
    <property type="match status" value="2"/>
</dbReference>
<evidence type="ECO:0000250" key="1">
    <source>
        <dbReference type="UniProtKB" id="P26769"/>
    </source>
</evidence>
<evidence type="ECO:0000250" key="2">
    <source>
        <dbReference type="UniProtKB" id="P30803"/>
    </source>
</evidence>
<evidence type="ECO:0000250" key="3">
    <source>
        <dbReference type="UniProtKB" id="P40145"/>
    </source>
</evidence>
<evidence type="ECO:0000250" key="4">
    <source>
        <dbReference type="UniProtKB" id="P40146"/>
    </source>
</evidence>
<evidence type="ECO:0000255" key="5"/>
<evidence type="ECO:0000255" key="6">
    <source>
        <dbReference type="PROSITE-ProRule" id="PRU00099"/>
    </source>
</evidence>
<evidence type="ECO:0000256" key="7">
    <source>
        <dbReference type="SAM" id="MobiDB-lite"/>
    </source>
</evidence>
<evidence type="ECO:0000269" key="8">
    <source>
    </source>
</evidence>
<evidence type="ECO:0000269" key="9">
    <source>
    </source>
</evidence>
<evidence type="ECO:0000269" key="10">
    <source>
    </source>
</evidence>
<evidence type="ECO:0000269" key="11">
    <source>
    </source>
</evidence>
<evidence type="ECO:0000269" key="12">
    <source>
    </source>
</evidence>
<evidence type="ECO:0000269" key="13">
    <source>
    </source>
</evidence>
<evidence type="ECO:0000269" key="14">
    <source>
    </source>
</evidence>
<evidence type="ECO:0000269" key="15">
    <source>
    </source>
</evidence>
<evidence type="ECO:0000269" key="16">
    <source>
    </source>
</evidence>
<evidence type="ECO:0000269" key="17">
    <source>
    </source>
</evidence>
<evidence type="ECO:0000269" key="18">
    <source>
    </source>
</evidence>
<evidence type="ECO:0000305" key="19"/>
<evidence type="ECO:0000312" key="20">
    <source>
        <dbReference type="MGI" id="MGI:1341110"/>
    </source>
</evidence>
<evidence type="ECO:0007744" key="21">
    <source>
    </source>
</evidence>
<evidence type="ECO:0007744" key="22">
    <source>
    </source>
</evidence>